<dbReference type="EC" id="1.14.14.-" evidence="3"/>
<dbReference type="EMBL" id="OP947603">
    <property type="protein sequence ID" value="WBW48728.1"/>
    <property type="molecule type" value="mRNA"/>
</dbReference>
<dbReference type="SMR" id="P0DXH8"/>
<dbReference type="UniPathway" id="UPA00213"/>
<dbReference type="GO" id="GO:0016020">
    <property type="term" value="C:membrane"/>
    <property type="evidence" value="ECO:0007669"/>
    <property type="project" value="UniProtKB-SubCell"/>
</dbReference>
<dbReference type="GO" id="GO:0020037">
    <property type="term" value="F:heme binding"/>
    <property type="evidence" value="ECO:0007669"/>
    <property type="project" value="InterPro"/>
</dbReference>
<dbReference type="GO" id="GO:0005506">
    <property type="term" value="F:iron ion binding"/>
    <property type="evidence" value="ECO:0007669"/>
    <property type="project" value="InterPro"/>
</dbReference>
<dbReference type="GO" id="GO:0004497">
    <property type="term" value="F:monooxygenase activity"/>
    <property type="evidence" value="ECO:0007669"/>
    <property type="project" value="InterPro"/>
</dbReference>
<dbReference type="GO" id="GO:0016705">
    <property type="term" value="F:oxidoreductase activity, acting on paired donors, with incorporation or reduction of molecular oxygen"/>
    <property type="evidence" value="ECO:0007669"/>
    <property type="project" value="InterPro"/>
</dbReference>
<dbReference type="GO" id="GO:0016125">
    <property type="term" value="P:sterol metabolic process"/>
    <property type="evidence" value="ECO:0007669"/>
    <property type="project" value="TreeGrafter"/>
</dbReference>
<dbReference type="CDD" id="cd11043">
    <property type="entry name" value="CYP90-like"/>
    <property type="match status" value="1"/>
</dbReference>
<dbReference type="FunFam" id="1.10.630.10:FF:000022">
    <property type="entry name" value="Taxadiene 5-alpha hydroxylase"/>
    <property type="match status" value="1"/>
</dbReference>
<dbReference type="Gene3D" id="1.10.630.10">
    <property type="entry name" value="Cytochrome P450"/>
    <property type="match status" value="1"/>
</dbReference>
<dbReference type="InterPro" id="IPR001128">
    <property type="entry name" value="Cyt_P450"/>
</dbReference>
<dbReference type="InterPro" id="IPR017972">
    <property type="entry name" value="Cyt_P450_CS"/>
</dbReference>
<dbReference type="InterPro" id="IPR002401">
    <property type="entry name" value="Cyt_P450_E_grp-I"/>
</dbReference>
<dbReference type="InterPro" id="IPR036396">
    <property type="entry name" value="Cyt_P450_sf"/>
</dbReference>
<dbReference type="PANTHER" id="PTHR24286:SF381">
    <property type="entry name" value="BETA-AMYRIN 28-OXIDASE"/>
    <property type="match status" value="1"/>
</dbReference>
<dbReference type="PANTHER" id="PTHR24286">
    <property type="entry name" value="CYTOCHROME P450 26"/>
    <property type="match status" value="1"/>
</dbReference>
<dbReference type="Pfam" id="PF00067">
    <property type="entry name" value="p450"/>
    <property type="match status" value="1"/>
</dbReference>
<dbReference type="PRINTS" id="PR00463">
    <property type="entry name" value="EP450I"/>
</dbReference>
<dbReference type="SUPFAM" id="SSF48264">
    <property type="entry name" value="Cytochrome P450"/>
    <property type="match status" value="1"/>
</dbReference>
<dbReference type="PROSITE" id="PS00086">
    <property type="entry name" value="CYTOCHROME_P450"/>
    <property type="match status" value="1"/>
</dbReference>
<accession>P0DXH8</accession>
<feature type="chain" id="PRO_0000461375" description="Cytochrome P450 family 716 subfamily AD polypeptide 4">
    <location>
        <begin position="1"/>
        <end position="478"/>
    </location>
</feature>
<feature type="transmembrane region" description="Helical" evidence="2">
    <location>
        <begin position="1"/>
        <end position="21"/>
    </location>
</feature>
<feature type="binding site" description="axial binding residue" evidence="1">
    <location>
        <position position="425"/>
    </location>
    <ligand>
        <name>heme</name>
        <dbReference type="ChEBI" id="CHEBI:30413"/>
    </ligand>
    <ligandPart>
        <name>Fe</name>
        <dbReference type="ChEBI" id="CHEBI:18248"/>
    </ligandPart>
</feature>
<proteinExistence type="evidence at protein level"/>
<gene>
    <name evidence="4" type="primary">CYP716AD4</name>
</gene>
<keyword id="KW-0408">Iron</keyword>
<keyword id="KW-0472">Membrane</keyword>
<keyword id="KW-0479">Metal-binding</keyword>
<keyword id="KW-0560">Oxidoreductase</keyword>
<keyword id="KW-0812">Transmembrane</keyword>
<keyword id="KW-1133">Transmembrane helix</keyword>
<protein>
    <recommendedName>
        <fullName evidence="4">Cytochrome P450 family 716 subfamily AD polypeptide 4</fullName>
        <shortName evidence="4">MaCYP716AD4</shortName>
        <ecNumber evidence="3">1.14.14.-</ecNumber>
    </recommendedName>
</protein>
<comment type="function">
    <text evidence="3">Monooxygenase involved in the biosynthesis of limonoids triterpene natural products such as azadirachtin, an antifeedant widely used as bioinsecticide, and possessing many medicinal applications including anti-tumoral, anti-malarial, anti-rheumatic, antibacterial, anti-inflammatory, anti-pyretic and diuretic effects (PubMed:36701471). Catalyzes the formation of (1S,3bR,4R,5aR,9aR,9bR,11aS)-1-(1-hydroxy-4-oxobutan-2-yl)-3b,6,6,9a,11a-pentamethyl-7-oxo-1H,2H,3bH,4H,5H,5aH,6H,7H,9aH,9bH,10H,11H,11aH-cyclopenta[a]phenanthren-4-yl acetate (PubMed:36701471).</text>
</comment>
<comment type="catalytic activity">
    <reaction evidence="3">
        <text>(1S,3bR,4R,5aR,9aR,9bR,11aS)-1-[(4R)-5-[(2S)-3,3-dimethyloxiran-2-yl]-1,4-dihydroxybutan-2-yl]-3b,6,6,9a,11a-pentamethyl-7-oxo-1H,2H,3bH,4H,5H,5aH,6H,7H,9aH,9bH,10H,11H,11aH-cyclopenta[a]phenanthren-4-yl acetate + reduced [NADPH--hemoprotein reductase] + O2 = (1S,3bR,4R,5aR,9aR,9bR,11aS)-1-(1-hydroxy-4-oxobutan-2-yl)-3b,6,6,9a,11a-pentamethyl-7-oxo-1H,2H,3bH,4H,5H,5aH,6H,7H,9aH,9bH,10H,11H,11aH-cyclopenta[a]phenanthren-4-yl acetate + 2-methylpropanoate + oxidized [NADPH--hemoprotein reductase] + H2O + 2 H(+)</text>
        <dbReference type="Rhea" id="RHEA:80351"/>
        <dbReference type="Rhea" id="RHEA-COMP:11964"/>
        <dbReference type="Rhea" id="RHEA-COMP:11965"/>
        <dbReference type="ChEBI" id="CHEBI:15377"/>
        <dbReference type="ChEBI" id="CHEBI:15378"/>
        <dbReference type="ChEBI" id="CHEBI:15379"/>
        <dbReference type="ChEBI" id="CHEBI:48944"/>
        <dbReference type="ChEBI" id="CHEBI:57618"/>
        <dbReference type="ChEBI" id="CHEBI:58210"/>
        <dbReference type="ChEBI" id="CHEBI:231471"/>
        <dbReference type="ChEBI" id="CHEBI:231473"/>
    </reaction>
    <physiologicalReaction direction="left-to-right" evidence="3">
        <dbReference type="Rhea" id="RHEA:80352"/>
    </physiologicalReaction>
</comment>
<comment type="cofactor">
    <cofactor evidence="1">
        <name>heme</name>
        <dbReference type="ChEBI" id="CHEBI:30413"/>
    </cofactor>
</comment>
<comment type="pathway">
    <text evidence="3">Secondary metabolite biosynthesis; terpenoid biosynthesis.</text>
</comment>
<comment type="subcellular location">
    <subcellularLocation>
        <location evidence="2">Membrane</location>
        <topology evidence="2">Single-pass membrane protein</topology>
    </subcellularLocation>
</comment>
<comment type="tissue specificity">
    <text evidence="3">Mainly expressed in petioles and, to a lower extent, in roots.</text>
</comment>
<comment type="similarity">
    <text evidence="5">Belongs to the cytochrome P450 family.</text>
</comment>
<organism>
    <name type="scientific">Melia azedarach</name>
    <name type="common">Chinaberry tree</name>
    <dbReference type="NCBI Taxonomy" id="155640"/>
    <lineage>
        <taxon>Eukaryota</taxon>
        <taxon>Viridiplantae</taxon>
        <taxon>Streptophyta</taxon>
        <taxon>Embryophyta</taxon>
        <taxon>Tracheophyta</taxon>
        <taxon>Spermatophyta</taxon>
        <taxon>Magnoliopsida</taxon>
        <taxon>eudicotyledons</taxon>
        <taxon>Gunneridae</taxon>
        <taxon>Pentapetalae</taxon>
        <taxon>rosids</taxon>
        <taxon>malvids</taxon>
        <taxon>Sapindales</taxon>
        <taxon>Meliaceae</taxon>
        <taxon>Melia</taxon>
    </lineage>
</organism>
<sequence length="478" mass="55235">MELFLPSVLLILTVFCFYYLFKPKQTQNAPLPPGHVHWPLKIFETFDYMFKAKTNSIHKFIAERRNKYNTKLFKTSHIGQNMVFLCSPEGNKFLFANDYKLVRSWWPVTFLRVFENAEEEITPEQVIRARKQFLSFFNEPEALAKHVSITDEVVKDHVKLFWDGSDEVTVYPIARKLTFAISCRLLADIRDREILDELLPAMGDVVAAFFALPINLPGTKFNRAVKGSRKCRKIFVDIIKQRKIDLFEKGRKEANDVLSNILLENHRDGIEVNEVALAKNLVSLLSAAFDNPSVTIVSIMKNLAENPEIYARVRSEQLEIAKGRAPGENLAMEDLKKMKFSMNVLSESLRLEAPASGTFREALNDFTYEGYLIPKGWKVHWSTHATHRNPQYFKDPEKFDPARFERNDPIVPYSYVPFGGGHHICPGKDFAKLQILIFIHHVVKKFNWEKVNPDEQMIRVPNLKAAKGLPVRLYPYNK</sequence>
<evidence type="ECO:0000250" key="1">
    <source>
        <dbReference type="UniProtKB" id="Q96242"/>
    </source>
</evidence>
<evidence type="ECO:0000255" key="2"/>
<evidence type="ECO:0000269" key="3">
    <source>
    </source>
</evidence>
<evidence type="ECO:0000303" key="4">
    <source>
    </source>
</evidence>
<evidence type="ECO:0000305" key="5"/>
<reference key="1">
    <citation type="journal article" date="2023" name="Science">
        <title>Complex scaffold remodeling in plant triterpene biosynthesis.</title>
        <authorList>
            <person name="De La Pena R."/>
            <person name="Hodgson H."/>
            <person name="Liu J.C."/>
            <person name="Stephenson M.J."/>
            <person name="Martin A.C."/>
            <person name="Owen C."/>
            <person name="Harkess A."/>
            <person name="Leebens-Mack J."/>
            <person name="Jimenez L.E."/>
            <person name="Osbourn A."/>
            <person name="Sattely E.S."/>
        </authorList>
    </citation>
    <scope>NUCLEOTIDE SEQUENCE [MRNA]</scope>
    <scope>FUNCTION</scope>
    <scope>CATALYTIC ACTIVITY</scope>
    <scope>PATHWAY</scope>
    <scope>TISSUE SPECIFICITY</scope>
    <source>
        <strain>cv. Valencia</strain>
    </source>
</reference>
<name>C6AD4_MELAZ</name>